<proteinExistence type="evidence at protein level"/>
<protein>
    <recommendedName>
        <fullName>DNA replication licensing factor MCM4</fullName>
        <ecNumber>3.6.4.12</ecNumber>
    </recommendedName>
    <alternativeName>
        <fullName>Minichromosome maintenance protein 4</fullName>
        <shortName>AtMCM4</shortName>
    </alternativeName>
</protein>
<comment type="function">
    <text evidence="1">Probable component of the MCM2-7 complex (MCM complex) that may function as a DNA helicase and which is essential to undergo a single round of replication initiation and elongation per cell cycle in eukaryotic cells.</text>
</comment>
<comment type="catalytic activity">
    <reaction>
        <text>ATP + H2O = ADP + phosphate + H(+)</text>
        <dbReference type="Rhea" id="RHEA:13065"/>
        <dbReference type="ChEBI" id="CHEBI:15377"/>
        <dbReference type="ChEBI" id="CHEBI:15378"/>
        <dbReference type="ChEBI" id="CHEBI:30616"/>
        <dbReference type="ChEBI" id="CHEBI:43474"/>
        <dbReference type="ChEBI" id="CHEBI:456216"/>
        <dbReference type="EC" id="3.6.4.12"/>
    </reaction>
</comment>
<comment type="subunit">
    <text evidence="4">Component of the minichromosome maintenance (MCM) complex, a heterotetramer composed of MCM2, MCM3, MCM4, MCM5, MCM6 and MCM7. Interacts with ETG1.</text>
</comment>
<comment type="subcellular location">
    <subcellularLocation>
        <location evidence="6">Nucleus</location>
    </subcellularLocation>
</comment>
<comment type="tissue specificity">
    <text evidence="5">Expressed in shoot apex and flower buds.</text>
</comment>
<comment type="similarity">
    <text evidence="6">Belongs to the MCM family.</text>
</comment>
<comment type="sequence caution" evidence="6">
    <conflict type="erroneous gene model prediction">
        <sequence resource="EMBL-CDS" id="AAD22296"/>
    </conflict>
</comment>
<dbReference type="EC" id="3.6.4.12"/>
<dbReference type="EMBL" id="AC007047">
    <property type="protein sequence ID" value="AAD22296.1"/>
    <property type="status" value="ALT_SEQ"/>
    <property type="molecule type" value="Genomic_DNA"/>
</dbReference>
<dbReference type="EMBL" id="CP002685">
    <property type="protein sequence ID" value="AEC06497.1"/>
    <property type="molecule type" value="Genomic_DNA"/>
</dbReference>
<dbReference type="EMBL" id="AK226795">
    <property type="protein sequence ID" value="BAE98893.1"/>
    <property type="molecule type" value="mRNA"/>
</dbReference>
<dbReference type="PIR" id="C84540">
    <property type="entry name" value="C84540"/>
</dbReference>
<dbReference type="RefSeq" id="NP_179236.3">
    <property type="nucleotide sequence ID" value="NM_127197.5"/>
</dbReference>
<dbReference type="SMR" id="Q0WVF5"/>
<dbReference type="BioGRID" id="1500">
    <property type="interactions" value="7"/>
</dbReference>
<dbReference type="FunCoup" id="Q0WVF5">
    <property type="interactions" value="3260"/>
</dbReference>
<dbReference type="IntAct" id="Q0WVF5">
    <property type="interactions" value="3"/>
</dbReference>
<dbReference type="MINT" id="Q0WVF5"/>
<dbReference type="STRING" id="3702.Q0WVF5"/>
<dbReference type="iPTMnet" id="Q0WVF5"/>
<dbReference type="PaxDb" id="3702-AT2G16440.1"/>
<dbReference type="ProteomicsDB" id="238241"/>
<dbReference type="EnsemblPlants" id="AT2G16440.1">
    <property type="protein sequence ID" value="AT2G16440.1"/>
    <property type="gene ID" value="AT2G16440"/>
</dbReference>
<dbReference type="GeneID" id="816142"/>
<dbReference type="Gramene" id="AT2G16440.1">
    <property type="protein sequence ID" value="AT2G16440.1"/>
    <property type="gene ID" value="AT2G16440"/>
</dbReference>
<dbReference type="KEGG" id="ath:AT2G16440"/>
<dbReference type="Araport" id="AT2G16440"/>
<dbReference type="TAIR" id="AT2G16440">
    <property type="gene designation" value="MCM4"/>
</dbReference>
<dbReference type="eggNOG" id="KOG0478">
    <property type="taxonomic scope" value="Eukaryota"/>
</dbReference>
<dbReference type="HOGENOM" id="CLU_000995_7_2_1"/>
<dbReference type="InParanoid" id="Q0WVF5"/>
<dbReference type="OMA" id="AFFKCNV"/>
<dbReference type="OrthoDB" id="10251574at2759"/>
<dbReference type="PhylomeDB" id="Q0WVF5"/>
<dbReference type="PRO" id="PR:Q0WVF5"/>
<dbReference type="Proteomes" id="UP000006548">
    <property type="component" value="Chromosome 2"/>
</dbReference>
<dbReference type="ExpressionAtlas" id="Q0WVF5">
    <property type="expression patterns" value="baseline and differential"/>
</dbReference>
<dbReference type="GO" id="GO:0009507">
    <property type="term" value="C:chloroplast"/>
    <property type="evidence" value="ECO:0007005"/>
    <property type="project" value="TAIR"/>
</dbReference>
<dbReference type="GO" id="GO:0042555">
    <property type="term" value="C:MCM complex"/>
    <property type="evidence" value="ECO:0007669"/>
    <property type="project" value="InterPro"/>
</dbReference>
<dbReference type="GO" id="GO:0000347">
    <property type="term" value="C:THO complex"/>
    <property type="evidence" value="ECO:0000314"/>
    <property type="project" value="UniProtKB"/>
</dbReference>
<dbReference type="GO" id="GO:0005524">
    <property type="term" value="F:ATP binding"/>
    <property type="evidence" value="ECO:0007669"/>
    <property type="project" value="UniProtKB-KW"/>
</dbReference>
<dbReference type="GO" id="GO:0016887">
    <property type="term" value="F:ATP hydrolysis activity"/>
    <property type="evidence" value="ECO:0007669"/>
    <property type="project" value="InterPro"/>
</dbReference>
<dbReference type="GO" id="GO:0003677">
    <property type="term" value="F:DNA binding"/>
    <property type="evidence" value="ECO:0007669"/>
    <property type="project" value="UniProtKB-KW"/>
</dbReference>
<dbReference type="GO" id="GO:0003678">
    <property type="term" value="F:DNA helicase activity"/>
    <property type="evidence" value="ECO:0007669"/>
    <property type="project" value="InterPro"/>
</dbReference>
<dbReference type="GO" id="GO:0008270">
    <property type="term" value="F:zinc ion binding"/>
    <property type="evidence" value="ECO:0007669"/>
    <property type="project" value="UniProtKB-KW"/>
</dbReference>
<dbReference type="GO" id="GO:0006260">
    <property type="term" value="P:DNA replication"/>
    <property type="evidence" value="ECO:0000353"/>
    <property type="project" value="TAIR"/>
</dbReference>
<dbReference type="GO" id="GO:0006270">
    <property type="term" value="P:DNA replication initiation"/>
    <property type="evidence" value="ECO:0007669"/>
    <property type="project" value="InterPro"/>
</dbReference>
<dbReference type="GO" id="GO:0009555">
    <property type="term" value="P:pollen development"/>
    <property type="evidence" value="ECO:0000315"/>
    <property type="project" value="TAIR"/>
</dbReference>
<dbReference type="CDD" id="cd17755">
    <property type="entry name" value="MCM4"/>
    <property type="match status" value="1"/>
</dbReference>
<dbReference type="FunFam" id="2.20.28.10:FF:000003">
    <property type="entry name" value="DNA helicase"/>
    <property type="match status" value="1"/>
</dbReference>
<dbReference type="FunFam" id="3.40.50.300:FF:000217">
    <property type="entry name" value="DNA helicase"/>
    <property type="match status" value="1"/>
</dbReference>
<dbReference type="Gene3D" id="2.20.28.10">
    <property type="match status" value="1"/>
</dbReference>
<dbReference type="Gene3D" id="3.30.1640.10">
    <property type="entry name" value="mini-chromosome maintenance (MCM) complex, chain A, domain 1"/>
    <property type="match status" value="1"/>
</dbReference>
<dbReference type="Gene3D" id="2.40.50.140">
    <property type="entry name" value="Nucleic acid-binding proteins"/>
    <property type="match status" value="1"/>
</dbReference>
<dbReference type="Gene3D" id="3.40.50.300">
    <property type="entry name" value="P-loop containing nucleotide triphosphate hydrolases"/>
    <property type="match status" value="1"/>
</dbReference>
<dbReference type="Gene3D" id="1.10.10.10">
    <property type="entry name" value="Winged helix-like DNA-binding domain superfamily/Winged helix DNA-binding domain"/>
    <property type="match status" value="1"/>
</dbReference>
<dbReference type="InterPro" id="IPR003593">
    <property type="entry name" value="AAA+_ATPase"/>
</dbReference>
<dbReference type="InterPro" id="IPR031327">
    <property type="entry name" value="MCM"/>
</dbReference>
<dbReference type="InterPro" id="IPR008047">
    <property type="entry name" value="MCM_4"/>
</dbReference>
<dbReference type="InterPro" id="IPR018525">
    <property type="entry name" value="MCM_CS"/>
</dbReference>
<dbReference type="InterPro" id="IPR001208">
    <property type="entry name" value="MCM_dom"/>
</dbReference>
<dbReference type="InterPro" id="IPR041562">
    <property type="entry name" value="MCM_lid"/>
</dbReference>
<dbReference type="InterPro" id="IPR027925">
    <property type="entry name" value="MCM_N"/>
</dbReference>
<dbReference type="InterPro" id="IPR033762">
    <property type="entry name" value="MCM_OB"/>
</dbReference>
<dbReference type="InterPro" id="IPR012340">
    <property type="entry name" value="NA-bd_OB-fold"/>
</dbReference>
<dbReference type="InterPro" id="IPR027417">
    <property type="entry name" value="P-loop_NTPase"/>
</dbReference>
<dbReference type="InterPro" id="IPR036388">
    <property type="entry name" value="WH-like_DNA-bd_sf"/>
</dbReference>
<dbReference type="PANTHER" id="PTHR11630">
    <property type="entry name" value="DNA REPLICATION LICENSING FACTOR MCM FAMILY MEMBER"/>
    <property type="match status" value="1"/>
</dbReference>
<dbReference type="PANTHER" id="PTHR11630:SF66">
    <property type="entry name" value="DNA REPLICATION LICENSING FACTOR MCM4"/>
    <property type="match status" value="1"/>
</dbReference>
<dbReference type="Pfam" id="PF00493">
    <property type="entry name" value="MCM"/>
    <property type="match status" value="1"/>
</dbReference>
<dbReference type="Pfam" id="PF17855">
    <property type="entry name" value="MCM_lid"/>
    <property type="match status" value="1"/>
</dbReference>
<dbReference type="Pfam" id="PF14551">
    <property type="entry name" value="MCM_N"/>
    <property type="match status" value="1"/>
</dbReference>
<dbReference type="Pfam" id="PF17207">
    <property type="entry name" value="MCM_OB"/>
    <property type="match status" value="1"/>
</dbReference>
<dbReference type="PRINTS" id="PR01657">
    <property type="entry name" value="MCMFAMILY"/>
</dbReference>
<dbReference type="PRINTS" id="PR01660">
    <property type="entry name" value="MCMPROTEIN4"/>
</dbReference>
<dbReference type="SMART" id="SM00382">
    <property type="entry name" value="AAA"/>
    <property type="match status" value="1"/>
</dbReference>
<dbReference type="SMART" id="SM00350">
    <property type="entry name" value="MCM"/>
    <property type="match status" value="1"/>
</dbReference>
<dbReference type="SUPFAM" id="SSF50249">
    <property type="entry name" value="Nucleic acid-binding proteins"/>
    <property type="match status" value="1"/>
</dbReference>
<dbReference type="SUPFAM" id="SSF52540">
    <property type="entry name" value="P-loop containing nucleoside triphosphate hydrolases"/>
    <property type="match status" value="1"/>
</dbReference>
<dbReference type="PROSITE" id="PS00847">
    <property type="entry name" value="MCM_1"/>
    <property type="match status" value="1"/>
</dbReference>
<dbReference type="PROSITE" id="PS50051">
    <property type="entry name" value="MCM_2"/>
    <property type="match status" value="1"/>
</dbReference>
<name>MCM4_ARATH</name>
<organism>
    <name type="scientific">Arabidopsis thaliana</name>
    <name type="common">Mouse-ear cress</name>
    <dbReference type="NCBI Taxonomy" id="3702"/>
    <lineage>
        <taxon>Eukaryota</taxon>
        <taxon>Viridiplantae</taxon>
        <taxon>Streptophyta</taxon>
        <taxon>Embryophyta</taxon>
        <taxon>Tracheophyta</taxon>
        <taxon>Spermatophyta</taxon>
        <taxon>Magnoliopsida</taxon>
        <taxon>eudicotyledons</taxon>
        <taxon>Gunneridae</taxon>
        <taxon>Pentapetalae</taxon>
        <taxon>rosids</taxon>
        <taxon>malvids</taxon>
        <taxon>Brassicales</taxon>
        <taxon>Brassicaceae</taxon>
        <taxon>Camelineae</taxon>
        <taxon>Arabidopsis</taxon>
    </lineage>
</organism>
<feature type="chain" id="PRO_0000425991" description="DNA replication licensing factor MCM4">
    <location>
        <begin position="1"/>
        <end position="847"/>
    </location>
</feature>
<feature type="domain" description="MCM">
    <location>
        <begin position="435"/>
        <end position="641"/>
    </location>
</feature>
<feature type="zinc finger region" description="C4-type" evidence="2">
    <location>
        <begin position="271"/>
        <end position="299"/>
    </location>
</feature>
<feature type="region of interest" description="Disordered" evidence="3">
    <location>
        <begin position="1"/>
        <end position="123"/>
    </location>
</feature>
<feature type="short sequence motif" description="Arginine finger">
    <location>
        <begin position="617"/>
        <end position="620"/>
    </location>
</feature>
<feature type="compositionally biased region" description="Polar residues" evidence="3">
    <location>
        <begin position="1"/>
        <end position="31"/>
    </location>
</feature>
<feature type="compositionally biased region" description="Low complexity" evidence="3">
    <location>
        <begin position="60"/>
        <end position="75"/>
    </location>
</feature>
<feature type="compositionally biased region" description="Gly residues" evidence="3">
    <location>
        <begin position="81"/>
        <end position="94"/>
    </location>
</feature>
<feature type="binding site" evidence="1">
    <location>
        <begin position="485"/>
        <end position="492"/>
    </location>
    <ligand>
        <name>ATP</name>
        <dbReference type="ChEBI" id="CHEBI:30616"/>
    </ligand>
</feature>
<evidence type="ECO:0000250" key="1"/>
<evidence type="ECO:0000255" key="2"/>
<evidence type="ECO:0000256" key="3">
    <source>
        <dbReference type="SAM" id="MobiDB-lite"/>
    </source>
</evidence>
<evidence type="ECO:0000269" key="4">
    <source>
    </source>
</evidence>
<evidence type="ECO:0000269" key="5">
    <source>
    </source>
</evidence>
<evidence type="ECO:0000305" key="6"/>
<accession>Q0WVF5</accession>
<accession>Q9SIV8</accession>
<sequence length="847" mass="93656">MASDSSLGNTNDGPPSPGENVSSPIENTYSSPAALHRRRRGRSSTPTQFATPPPPPSRLASSNSTPPTSRPSAARSKGRNGHGGGGGGGGGGDPGTPMSTDEPLPSSDDGEEDGGDDTTPTFVWGTNISVQDVKSAIEMFVKHFREARENSDDLFREGKYMVSIRKVIEIEGEWIDVDAFDVFDYDPDLYNKMVRYPLEVLAIFDIVLMDIVSTINRLFEKHVQVRIFNLRTSTSMRNLNPSDIEKMISLKGMIIRSSSIIPEIREAVFRCLVCGYFSDPIIVDRGKISEPPTCLKQECMTKNSMTLVHNRCRFADKQIVRLQETPDEIPEGGTPHTVSLLLHDKLVDNGKPGDRIEVTGIYRAMTVRVGPAHRTVKSVFKTYIDCLHIKKASKLRMSAEDPMDVDNSLRRVDEDVELDEEKLRKFQELSKQPDIYERLSRSLAPNIWELDDVKKGLLCQLFGGNALNLASGANFRGDINILLVGDPGTSKSQLLQYIHKLSPRGIYTSGRGSSAVGLTAYVAKDPETGETVLESGALVLSDRGICCIDEFDKMSDSARSMLHEVMEQQTVSIAKAGIIASLNARTSVLACANPSGSRYNPRLSVIENIHLPPTLLSRFDLIYLILDKPDEQTDRRLAKHIVALHFENAESAQEEAIDITTLTTYVSYARKNIHPKLSDEAAEELTRGYVELRKAGKFAGSSKKVITATPRQIESLIRLSEALARMRFSEWVEKHDVDEAFRLLRVAMQQSATDHATGTIDMDLINTGVSASERMRRDTFASSIRDIALEKMQIGGSSMRLSELLEELKKHGGNINTEIHLHDVRKAVATLASEGFLVAEGDRIKRV</sequence>
<gene>
    <name type="primary">MCM4</name>
    <name type="ordered locus">At2g16440</name>
    <name type="ORF">F16F14.6</name>
</gene>
<keyword id="KW-0067">ATP-binding</keyword>
<keyword id="KW-0131">Cell cycle</keyword>
<keyword id="KW-0235">DNA replication</keyword>
<keyword id="KW-0238">DNA-binding</keyword>
<keyword id="KW-0347">Helicase</keyword>
<keyword id="KW-0378">Hydrolase</keyword>
<keyword id="KW-0479">Metal-binding</keyword>
<keyword id="KW-0547">Nucleotide-binding</keyword>
<keyword id="KW-0539">Nucleus</keyword>
<keyword id="KW-1185">Reference proteome</keyword>
<keyword id="KW-0862">Zinc</keyword>
<keyword id="KW-0863">Zinc-finger</keyword>
<reference key="1">
    <citation type="journal article" date="1999" name="Nature">
        <title>Sequence and analysis of chromosome 2 of the plant Arabidopsis thaliana.</title>
        <authorList>
            <person name="Lin X."/>
            <person name="Kaul S."/>
            <person name="Rounsley S.D."/>
            <person name="Shea T.P."/>
            <person name="Benito M.-I."/>
            <person name="Town C.D."/>
            <person name="Fujii C.Y."/>
            <person name="Mason T.M."/>
            <person name="Bowman C.L."/>
            <person name="Barnstead M.E."/>
            <person name="Feldblyum T.V."/>
            <person name="Buell C.R."/>
            <person name="Ketchum K.A."/>
            <person name="Lee J.J."/>
            <person name="Ronning C.M."/>
            <person name="Koo H.L."/>
            <person name="Moffat K.S."/>
            <person name="Cronin L.A."/>
            <person name="Shen M."/>
            <person name="Pai G."/>
            <person name="Van Aken S."/>
            <person name="Umayam L."/>
            <person name="Tallon L.J."/>
            <person name="Gill J.E."/>
            <person name="Adams M.D."/>
            <person name="Carrera A.J."/>
            <person name="Creasy T.H."/>
            <person name="Goodman H.M."/>
            <person name="Somerville C.R."/>
            <person name="Copenhaver G.P."/>
            <person name="Preuss D."/>
            <person name="Nierman W.C."/>
            <person name="White O."/>
            <person name="Eisen J.A."/>
            <person name="Salzberg S.L."/>
            <person name="Fraser C.M."/>
            <person name="Venter J.C."/>
        </authorList>
    </citation>
    <scope>NUCLEOTIDE SEQUENCE [LARGE SCALE GENOMIC DNA]</scope>
    <source>
        <strain>cv. Columbia</strain>
    </source>
</reference>
<reference key="2">
    <citation type="journal article" date="2017" name="Plant J.">
        <title>Araport11: a complete reannotation of the Arabidopsis thaliana reference genome.</title>
        <authorList>
            <person name="Cheng C.Y."/>
            <person name="Krishnakumar V."/>
            <person name="Chan A.P."/>
            <person name="Thibaud-Nissen F."/>
            <person name="Schobel S."/>
            <person name="Town C.D."/>
        </authorList>
    </citation>
    <scope>GENOME REANNOTATION</scope>
    <source>
        <strain>cv. Columbia</strain>
    </source>
</reference>
<reference key="3">
    <citation type="submission" date="2006-07" db="EMBL/GenBank/DDBJ databases">
        <title>Large-scale analysis of RIKEN Arabidopsis full-length (RAFL) cDNAs.</title>
        <authorList>
            <person name="Totoki Y."/>
            <person name="Seki M."/>
            <person name="Ishida J."/>
            <person name="Nakajima M."/>
            <person name="Enju A."/>
            <person name="Kamiya A."/>
            <person name="Narusaka M."/>
            <person name="Shin-i T."/>
            <person name="Nakagawa M."/>
            <person name="Sakamoto N."/>
            <person name="Oishi K."/>
            <person name="Kohara Y."/>
            <person name="Kobayashi M."/>
            <person name="Toyoda A."/>
            <person name="Sakaki Y."/>
            <person name="Sakurai T."/>
            <person name="Iida K."/>
            <person name="Akiyama K."/>
            <person name="Satou M."/>
            <person name="Toyoda T."/>
            <person name="Konagaya A."/>
            <person name="Carninci P."/>
            <person name="Kawai J."/>
            <person name="Hayashizaki Y."/>
            <person name="Shinozaki K."/>
        </authorList>
    </citation>
    <scope>NUCLEOTIDE SEQUENCE [LARGE SCALE MRNA]</scope>
    <source>
        <strain>cv. Columbia</strain>
    </source>
</reference>
<reference key="4">
    <citation type="journal article" date="2007" name="Plant Physiol.">
        <title>Genome-wide analysis of the core DNA replication machinery in the higher plants Arabidopsis and rice.</title>
        <authorList>
            <person name="Shultz R.W."/>
            <person name="Tatineni V.M."/>
            <person name="Hanley-Bowdoin L."/>
            <person name="Thompson W.F."/>
        </authorList>
    </citation>
    <scope>GENE FAMILY</scope>
</reference>
<reference key="5">
    <citation type="journal article" date="2008" name="EMBO J.">
        <title>The DNA replication checkpoint aids survival of plants deficient in the novel replisome factor ETG1.</title>
        <authorList>
            <person name="Takahashi N."/>
            <person name="Lammens T."/>
            <person name="Boudolf V."/>
            <person name="Maes S."/>
            <person name="Yoshizumi T."/>
            <person name="De Jaeger G."/>
            <person name="Witters E."/>
            <person name="Inze D."/>
            <person name="De Veylder L."/>
        </authorList>
    </citation>
    <scope>SUBUNIT</scope>
    <scope>INTERACTION WITH ETG1</scope>
</reference>
<reference key="6">
    <citation type="journal article" date="2009" name="Plant Physiol.">
        <title>Dynamic localization of the DNA replication proteins MCM5 and MCM7 in plants.</title>
        <authorList>
            <person name="Shultz R.W."/>
            <person name="Lee T.J."/>
            <person name="Allen G.C."/>
            <person name="Thompson W.F."/>
            <person name="Hanley-Bowdoin L."/>
        </authorList>
    </citation>
    <scope>TISSUE SPECIFICITY</scope>
</reference>